<accession>P07487</accession>
<accession>A5XCW0</accession>
<accession>Q541C2</accession>
<accession>Q9VXM7</accession>
<organism>
    <name type="scientific">Drosophila melanogaster</name>
    <name type="common">Fruit fly</name>
    <dbReference type="NCBI Taxonomy" id="7227"/>
    <lineage>
        <taxon>Eukaryota</taxon>
        <taxon>Metazoa</taxon>
        <taxon>Ecdysozoa</taxon>
        <taxon>Arthropoda</taxon>
        <taxon>Hexapoda</taxon>
        <taxon>Insecta</taxon>
        <taxon>Pterygota</taxon>
        <taxon>Neoptera</taxon>
        <taxon>Endopterygota</taxon>
        <taxon>Diptera</taxon>
        <taxon>Brachycera</taxon>
        <taxon>Muscomorpha</taxon>
        <taxon>Ephydroidea</taxon>
        <taxon>Drosophilidae</taxon>
        <taxon>Drosophila</taxon>
        <taxon>Sophophora</taxon>
    </lineage>
</organism>
<name>G3P2_DROME</name>
<reference key="1">
    <citation type="journal article" date="1985" name="J. Biol. Chem.">
        <title>Structure of two unlinked Drosophila melanogaster glyceraldehyde-3-phosphate dehydrogenase genes.</title>
        <authorList>
            <person name="Tso J.Y."/>
            <person name="Sun X.-H."/>
            <person name="Wu R."/>
        </authorList>
    </citation>
    <scope>NUCLEOTIDE SEQUENCE [GENOMIC DNA]</scope>
</reference>
<reference key="2">
    <citation type="journal article" date="2007" name="Mol. Biol. Evol.">
        <title>Adaptive evolution of metabolic pathways in Drosophila.</title>
        <authorList>
            <person name="Flowers J."/>
            <person name="Sezgin E."/>
            <person name="Kumagai S."/>
            <person name="Duvernell D."/>
            <person name="Matzkin L."/>
            <person name="Schmidt P."/>
            <person name="Eanes W."/>
        </authorList>
    </citation>
    <scope>NUCLEOTIDE SEQUENCE [GENOMIC DNA]</scope>
    <scope>VARIANT VAL-80</scope>
    <source>
        <strain>AF8</strain>
        <strain>AF9</strain>
        <strain>HFL1</strain>
        <strain>HFL2</strain>
        <strain>HFL3</strain>
        <strain>HFL4</strain>
        <strain>MA2</strain>
        <strain>MA7</strain>
        <strain>SC1</strain>
        <strain>SC2</strain>
        <strain>VT1</strain>
        <strain>VT2</strain>
        <strain>VT3</strain>
        <strain>VT4</strain>
        <strain>Zh23</strain>
        <strain>Zh33</strain>
    </source>
</reference>
<reference key="3">
    <citation type="journal article" date="2000" name="Science">
        <title>The genome sequence of Drosophila melanogaster.</title>
        <authorList>
            <person name="Adams M.D."/>
            <person name="Celniker S.E."/>
            <person name="Holt R.A."/>
            <person name="Evans C.A."/>
            <person name="Gocayne J.D."/>
            <person name="Amanatides P.G."/>
            <person name="Scherer S.E."/>
            <person name="Li P.W."/>
            <person name="Hoskins R.A."/>
            <person name="Galle R.F."/>
            <person name="George R.A."/>
            <person name="Lewis S.E."/>
            <person name="Richards S."/>
            <person name="Ashburner M."/>
            <person name="Henderson S.N."/>
            <person name="Sutton G.G."/>
            <person name="Wortman J.R."/>
            <person name="Yandell M.D."/>
            <person name="Zhang Q."/>
            <person name="Chen L.X."/>
            <person name="Brandon R.C."/>
            <person name="Rogers Y.-H.C."/>
            <person name="Blazej R.G."/>
            <person name="Champe M."/>
            <person name="Pfeiffer B.D."/>
            <person name="Wan K.H."/>
            <person name="Doyle C."/>
            <person name="Baxter E.G."/>
            <person name="Helt G."/>
            <person name="Nelson C.R."/>
            <person name="Miklos G.L.G."/>
            <person name="Abril J.F."/>
            <person name="Agbayani A."/>
            <person name="An H.-J."/>
            <person name="Andrews-Pfannkoch C."/>
            <person name="Baldwin D."/>
            <person name="Ballew R.M."/>
            <person name="Basu A."/>
            <person name="Baxendale J."/>
            <person name="Bayraktaroglu L."/>
            <person name="Beasley E.M."/>
            <person name="Beeson K.Y."/>
            <person name="Benos P.V."/>
            <person name="Berman B.P."/>
            <person name="Bhandari D."/>
            <person name="Bolshakov S."/>
            <person name="Borkova D."/>
            <person name="Botchan M.R."/>
            <person name="Bouck J."/>
            <person name="Brokstein P."/>
            <person name="Brottier P."/>
            <person name="Burtis K.C."/>
            <person name="Busam D.A."/>
            <person name="Butler H."/>
            <person name="Cadieu E."/>
            <person name="Center A."/>
            <person name="Chandra I."/>
            <person name="Cherry J.M."/>
            <person name="Cawley S."/>
            <person name="Dahlke C."/>
            <person name="Davenport L.B."/>
            <person name="Davies P."/>
            <person name="de Pablos B."/>
            <person name="Delcher A."/>
            <person name="Deng Z."/>
            <person name="Mays A.D."/>
            <person name="Dew I."/>
            <person name="Dietz S.M."/>
            <person name="Dodson K."/>
            <person name="Doup L.E."/>
            <person name="Downes M."/>
            <person name="Dugan-Rocha S."/>
            <person name="Dunkov B.C."/>
            <person name="Dunn P."/>
            <person name="Durbin K.J."/>
            <person name="Evangelista C.C."/>
            <person name="Ferraz C."/>
            <person name="Ferriera S."/>
            <person name="Fleischmann W."/>
            <person name="Fosler C."/>
            <person name="Gabrielian A.E."/>
            <person name="Garg N.S."/>
            <person name="Gelbart W.M."/>
            <person name="Glasser K."/>
            <person name="Glodek A."/>
            <person name="Gong F."/>
            <person name="Gorrell J.H."/>
            <person name="Gu Z."/>
            <person name="Guan P."/>
            <person name="Harris M."/>
            <person name="Harris N.L."/>
            <person name="Harvey D.A."/>
            <person name="Heiman T.J."/>
            <person name="Hernandez J.R."/>
            <person name="Houck J."/>
            <person name="Hostin D."/>
            <person name="Houston K.A."/>
            <person name="Howland T.J."/>
            <person name="Wei M.-H."/>
            <person name="Ibegwam C."/>
            <person name="Jalali M."/>
            <person name="Kalush F."/>
            <person name="Karpen G.H."/>
            <person name="Ke Z."/>
            <person name="Kennison J.A."/>
            <person name="Ketchum K.A."/>
            <person name="Kimmel B.E."/>
            <person name="Kodira C.D."/>
            <person name="Kraft C.L."/>
            <person name="Kravitz S."/>
            <person name="Kulp D."/>
            <person name="Lai Z."/>
            <person name="Lasko P."/>
            <person name="Lei Y."/>
            <person name="Levitsky A.A."/>
            <person name="Li J.H."/>
            <person name="Li Z."/>
            <person name="Liang Y."/>
            <person name="Lin X."/>
            <person name="Liu X."/>
            <person name="Mattei B."/>
            <person name="McIntosh T.C."/>
            <person name="McLeod M.P."/>
            <person name="McPherson D."/>
            <person name="Merkulov G."/>
            <person name="Milshina N.V."/>
            <person name="Mobarry C."/>
            <person name="Morris J."/>
            <person name="Moshrefi A."/>
            <person name="Mount S.M."/>
            <person name="Moy M."/>
            <person name="Murphy B."/>
            <person name="Murphy L."/>
            <person name="Muzny D.M."/>
            <person name="Nelson D.L."/>
            <person name="Nelson D.R."/>
            <person name="Nelson K.A."/>
            <person name="Nixon K."/>
            <person name="Nusskern D.R."/>
            <person name="Pacleb J.M."/>
            <person name="Palazzolo M."/>
            <person name="Pittman G.S."/>
            <person name="Pan S."/>
            <person name="Pollard J."/>
            <person name="Puri V."/>
            <person name="Reese M.G."/>
            <person name="Reinert K."/>
            <person name="Remington K."/>
            <person name="Saunders R.D.C."/>
            <person name="Scheeler F."/>
            <person name="Shen H."/>
            <person name="Shue B.C."/>
            <person name="Siden-Kiamos I."/>
            <person name="Simpson M."/>
            <person name="Skupski M.P."/>
            <person name="Smith T.J."/>
            <person name="Spier E."/>
            <person name="Spradling A.C."/>
            <person name="Stapleton M."/>
            <person name="Strong R."/>
            <person name="Sun E."/>
            <person name="Svirskas R."/>
            <person name="Tector C."/>
            <person name="Turner R."/>
            <person name="Venter E."/>
            <person name="Wang A.H."/>
            <person name="Wang X."/>
            <person name="Wang Z.-Y."/>
            <person name="Wassarman D.A."/>
            <person name="Weinstock G.M."/>
            <person name="Weissenbach J."/>
            <person name="Williams S.M."/>
            <person name="Woodage T."/>
            <person name="Worley K.C."/>
            <person name="Wu D."/>
            <person name="Yang S."/>
            <person name="Yao Q.A."/>
            <person name="Ye J."/>
            <person name="Yeh R.-F."/>
            <person name="Zaveri J.S."/>
            <person name="Zhan M."/>
            <person name="Zhang G."/>
            <person name="Zhao Q."/>
            <person name="Zheng L."/>
            <person name="Zheng X.H."/>
            <person name="Zhong F.N."/>
            <person name="Zhong W."/>
            <person name="Zhou X."/>
            <person name="Zhu S.C."/>
            <person name="Zhu X."/>
            <person name="Smith H.O."/>
            <person name="Gibbs R.A."/>
            <person name="Myers E.W."/>
            <person name="Rubin G.M."/>
            <person name="Venter J.C."/>
        </authorList>
    </citation>
    <scope>NUCLEOTIDE SEQUENCE [LARGE SCALE GENOMIC DNA]</scope>
    <source>
        <strain>Berkeley</strain>
    </source>
</reference>
<reference key="4">
    <citation type="journal article" date="2002" name="Genome Biol.">
        <title>Annotation of the Drosophila melanogaster euchromatic genome: a systematic review.</title>
        <authorList>
            <person name="Misra S."/>
            <person name="Crosby M.A."/>
            <person name="Mungall C.J."/>
            <person name="Matthews B.B."/>
            <person name="Campbell K.S."/>
            <person name="Hradecky P."/>
            <person name="Huang Y."/>
            <person name="Kaminker J.S."/>
            <person name="Millburn G.H."/>
            <person name="Prochnik S.E."/>
            <person name="Smith C.D."/>
            <person name="Tupy J.L."/>
            <person name="Whitfield E.J."/>
            <person name="Bayraktaroglu L."/>
            <person name="Berman B.P."/>
            <person name="Bettencourt B.R."/>
            <person name="Celniker S.E."/>
            <person name="de Grey A.D.N.J."/>
            <person name="Drysdale R.A."/>
            <person name="Harris N.L."/>
            <person name="Richter J."/>
            <person name="Russo S."/>
            <person name="Schroeder A.J."/>
            <person name="Shu S.Q."/>
            <person name="Stapleton M."/>
            <person name="Yamada C."/>
            <person name="Ashburner M."/>
            <person name="Gelbart W.M."/>
            <person name="Rubin G.M."/>
            <person name="Lewis S.E."/>
        </authorList>
    </citation>
    <scope>GENOME REANNOTATION</scope>
    <source>
        <strain>Berkeley</strain>
    </source>
</reference>
<reference key="5">
    <citation type="journal article" date="2002" name="Genome Biol.">
        <title>A Drosophila full-length cDNA resource.</title>
        <authorList>
            <person name="Stapleton M."/>
            <person name="Carlson J.W."/>
            <person name="Brokstein P."/>
            <person name="Yu C."/>
            <person name="Champe M."/>
            <person name="George R.A."/>
            <person name="Guarin H."/>
            <person name="Kronmiller B."/>
            <person name="Pacleb J.M."/>
            <person name="Park S."/>
            <person name="Wan K.H."/>
            <person name="Rubin G.M."/>
            <person name="Celniker S.E."/>
        </authorList>
    </citation>
    <scope>NUCLEOTIDE SEQUENCE [LARGE SCALE MRNA]</scope>
    <source>
        <strain>Berkeley</strain>
        <tissue>Head</tissue>
    </source>
</reference>
<reference key="6">
    <citation type="journal article" date="2007" name="Mol. Biosyst.">
        <title>An integrated chemical, mass spectrometric and computational strategy for (quantitative) phosphoproteomics: application to Drosophila melanogaster Kc167 cells.</title>
        <authorList>
            <person name="Bodenmiller B."/>
            <person name="Mueller L.N."/>
            <person name="Pedrioli P.G.A."/>
            <person name="Pflieger D."/>
            <person name="Juenger M.A."/>
            <person name="Eng J.K."/>
            <person name="Aebersold R."/>
            <person name="Tao W.A."/>
        </authorList>
    </citation>
    <scope>PHOSPHORYLATION [LARGE SCALE ANALYSIS] AT TYR-273 AND THR-274</scope>
    <scope>IDENTIFICATION BY MASS SPECTROMETRY</scope>
</reference>
<sequence>MSKIGINGFGRIGRLVLRAAIDKGANVVAVNDPFIDVNYMVYLFKFDSTHGRFKGTVAAEGGFLVVNGQKITVFSERDPANINWASAGAEYIVESTGVFTTIDKASTHLKGGAKKVIISAPSADAPMFVCGVNLDAYKPDMKVVSNASCTTNCLAPLAKVINDNFEIVEGLMTTVHATTATQKTVDGPSGKLWRDGRGAAQNIIPASTGAAKAVGKVIPALNGKLTGMAFRVPTPNVSVVDLTVRLGKGASYDEIKAKVQEAANGPLKGILGYTDEEVVSTDFLSDTHSSVFDAKAGISLNDKFVKLISWYDNEFGYSNRVIDLIKYMQSKD</sequence>
<gene>
    <name type="primary">Gapdh2</name>
    <name type="ORF">CG8893</name>
</gene>
<protein>
    <recommendedName>
        <fullName>Glyceraldehyde-3-phosphate dehydrogenase 2</fullName>
        <ecNumber>1.2.1.12</ecNumber>
    </recommendedName>
    <alternativeName>
        <fullName>Glyceraldehyde-3-phosphate dehydrogenase II</fullName>
        <shortName>GAPDH II</shortName>
    </alternativeName>
</protein>
<dbReference type="EC" id="1.2.1.12"/>
<dbReference type="EMBL" id="M11255">
    <property type="protein sequence ID" value="AAA28561.1"/>
    <property type="molecule type" value="Genomic_DNA"/>
</dbReference>
<dbReference type="EMBL" id="DQ864106">
    <property type="protein sequence ID" value="ABH06741.1"/>
    <property type="molecule type" value="Genomic_DNA"/>
</dbReference>
<dbReference type="EMBL" id="DQ864107">
    <property type="protein sequence ID" value="ABH06742.1"/>
    <property type="molecule type" value="Genomic_DNA"/>
</dbReference>
<dbReference type="EMBL" id="DQ864108">
    <property type="protein sequence ID" value="ABH06743.1"/>
    <property type="molecule type" value="Genomic_DNA"/>
</dbReference>
<dbReference type="EMBL" id="DQ864109">
    <property type="protein sequence ID" value="ABH06744.1"/>
    <property type="molecule type" value="Genomic_DNA"/>
</dbReference>
<dbReference type="EMBL" id="DQ864110">
    <property type="protein sequence ID" value="ABH06745.1"/>
    <property type="molecule type" value="Genomic_DNA"/>
</dbReference>
<dbReference type="EMBL" id="DQ864111">
    <property type="protein sequence ID" value="ABH06746.1"/>
    <property type="molecule type" value="Genomic_DNA"/>
</dbReference>
<dbReference type="EMBL" id="DQ864112">
    <property type="protein sequence ID" value="ABH06747.1"/>
    <property type="molecule type" value="Genomic_DNA"/>
</dbReference>
<dbReference type="EMBL" id="DQ864113">
    <property type="protein sequence ID" value="ABH06748.1"/>
    <property type="molecule type" value="Genomic_DNA"/>
</dbReference>
<dbReference type="EMBL" id="DQ864114">
    <property type="protein sequence ID" value="ABH06749.1"/>
    <property type="molecule type" value="Genomic_DNA"/>
</dbReference>
<dbReference type="EMBL" id="DQ864115">
    <property type="protein sequence ID" value="ABH06750.1"/>
    <property type="molecule type" value="Genomic_DNA"/>
</dbReference>
<dbReference type="EMBL" id="DQ864116">
    <property type="protein sequence ID" value="ABH06751.1"/>
    <property type="molecule type" value="Genomic_DNA"/>
</dbReference>
<dbReference type="EMBL" id="DQ864117">
    <property type="protein sequence ID" value="ABH06752.1"/>
    <property type="molecule type" value="Genomic_DNA"/>
</dbReference>
<dbReference type="EMBL" id="DQ864118">
    <property type="protein sequence ID" value="ABH06753.1"/>
    <property type="molecule type" value="Genomic_DNA"/>
</dbReference>
<dbReference type="EMBL" id="DQ864119">
    <property type="protein sequence ID" value="ABH06754.1"/>
    <property type="molecule type" value="Genomic_DNA"/>
</dbReference>
<dbReference type="EMBL" id="DQ864120">
    <property type="protein sequence ID" value="ABH06755.1"/>
    <property type="molecule type" value="Genomic_DNA"/>
</dbReference>
<dbReference type="EMBL" id="DQ864121">
    <property type="protein sequence ID" value="ABH06756.1"/>
    <property type="molecule type" value="Genomic_DNA"/>
</dbReference>
<dbReference type="EMBL" id="AE014298">
    <property type="protein sequence ID" value="AAF48531.1"/>
    <property type="molecule type" value="Genomic_DNA"/>
</dbReference>
<dbReference type="EMBL" id="AY094940">
    <property type="protein sequence ID" value="AAM11293.1"/>
    <property type="molecule type" value="mRNA"/>
</dbReference>
<dbReference type="PIR" id="B22366">
    <property type="entry name" value="B22366"/>
</dbReference>
<dbReference type="RefSeq" id="NP_001259584.1">
    <property type="nucleotide sequence ID" value="NM_001272655.1"/>
</dbReference>
<dbReference type="RefSeq" id="NP_542445.1">
    <property type="nucleotide sequence ID" value="NM_080714.4"/>
</dbReference>
<dbReference type="SMR" id="P07487"/>
<dbReference type="BioGRID" id="58893">
    <property type="interactions" value="42"/>
</dbReference>
<dbReference type="DIP" id="DIP-17969N"/>
<dbReference type="FunCoup" id="P07487">
    <property type="interactions" value="323"/>
</dbReference>
<dbReference type="IntAct" id="P07487">
    <property type="interactions" value="71"/>
</dbReference>
<dbReference type="STRING" id="7227.FBpp0073922"/>
<dbReference type="iPTMnet" id="P07487"/>
<dbReference type="PaxDb" id="7227-FBpp0073922"/>
<dbReference type="DNASU" id="32545"/>
<dbReference type="EnsemblMetazoa" id="FBtr0074112">
    <property type="protein sequence ID" value="FBpp0073922"/>
    <property type="gene ID" value="FBgn0001092"/>
</dbReference>
<dbReference type="EnsemblMetazoa" id="FBtr0332618">
    <property type="protein sequence ID" value="FBpp0304864"/>
    <property type="gene ID" value="FBgn0001092"/>
</dbReference>
<dbReference type="GeneID" id="32545"/>
<dbReference type="KEGG" id="dme:Dmel_CG8893"/>
<dbReference type="AGR" id="FB:FBgn0001092"/>
<dbReference type="CTD" id="32545"/>
<dbReference type="FlyBase" id="FBgn0001092">
    <property type="gene designation" value="Gapdh2"/>
</dbReference>
<dbReference type="VEuPathDB" id="VectorBase:FBgn0001092"/>
<dbReference type="eggNOG" id="KOG0657">
    <property type="taxonomic scope" value="Eukaryota"/>
</dbReference>
<dbReference type="GeneTree" id="ENSGT00940000153298"/>
<dbReference type="HOGENOM" id="CLU_030140_0_3_1"/>
<dbReference type="InParanoid" id="P07487"/>
<dbReference type="OMA" id="YGYTCNM"/>
<dbReference type="OrthoDB" id="1152826at2759"/>
<dbReference type="PhylomeDB" id="P07487"/>
<dbReference type="Reactome" id="R-DME-70171">
    <property type="pathway name" value="Glycolysis"/>
</dbReference>
<dbReference type="Reactome" id="R-DME-70263">
    <property type="pathway name" value="Gluconeogenesis"/>
</dbReference>
<dbReference type="SignaLink" id="P07487"/>
<dbReference type="UniPathway" id="UPA00109">
    <property type="reaction ID" value="UER00184"/>
</dbReference>
<dbReference type="BioGRID-ORCS" id="32545">
    <property type="hits" value="0 hits in 3 CRISPR screens"/>
</dbReference>
<dbReference type="ChiTaRS" id="Gapdh2">
    <property type="organism name" value="fly"/>
</dbReference>
<dbReference type="GenomeRNAi" id="32545"/>
<dbReference type="PRO" id="PR:P07487"/>
<dbReference type="Proteomes" id="UP000000803">
    <property type="component" value="Chromosome X"/>
</dbReference>
<dbReference type="Bgee" id="FBgn0001092">
    <property type="expression patterns" value="Expressed in ensheathing neuropil associated glial cell (Drosophila) in brain and 269 other cell types or tissues"/>
</dbReference>
<dbReference type="ExpressionAtlas" id="P07487">
    <property type="expression patterns" value="baseline and differential"/>
</dbReference>
<dbReference type="GO" id="GO:0005829">
    <property type="term" value="C:cytosol"/>
    <property type="evidence" value="ECO:0000250"/>
    <property type="project" value="FlyBase"/>
</dbReference>
<dbReference type="GO" id="GO:0005739">
    <property type="term" value="C:mitochondrion"/>
    <property type="evidence" value="ECO:0000250"/>
    <property type="project" value="FlyBase"/>
</dbReference>
<dbReference type="GO" id="GO:0004365">
    <property type="term" value="F:glyceraldehyde-3-phosphate dehydrogenase (NAD+) (phosphorylating) activity"/>
    <property type="evidence" value="ECO:0000316"/>
    <property type="project" value="FlyBase"/>
</dbReference>
<dbReference type="GO" id="GO:0051287">
    <property type="term" value="F:NAD binding"/>
    <property type="evidence" value="ECO:0007669"/>
    <property type="project" value="InterPro"/>
</dbReference>
<dbReference type="GO" id="GO:0050661">
    <property type="term" value="F:NADP binding"/>
    <property type="evidence" value="ECO:0007669"/>
    <property type="project" value="InterPro"/>
</dbReference>
<dbReference type="GO" id="GO:0035605">
    <property type="term" value="F:peptidyl-cysteine S-nitrosylase activity"/>
    <property type="evidence" value="ECO:0000250"/>
    <property type="project" value="FlyBase"/>
</dbReference>
<dbReference type="GO" id="GO:0061621">
    <property type="term" value="P:canonical glycolysis"/>
    <property type="evidence" value="ECO:0000250"/>
    <property type="project" value="FlyBase"/>
</dbReference>
<dbReference type="GO" id="GO:0006094">
    <property type="term" value="P:gluconeogenesis"/>
    <property type="evidence" value="ECO:0000250"/>
    <property type="project" value="FlyBase"/>
</dbReference>
<dbReference type="GO" id="GO:0042593">
    <property type="term" value="P:glucose homeostasis"/>
    <property type="evidence" value="ECO:0000315"/>
    <property type="project" value="FlyBase"/>
</dbReference>
<dbReference type="GO" id="GO:0019682">
    <property type="term" value="P:glyceraldehyde-3-phosphate metabolic process"/>
    <property type="evidence" value="ECO:0000316"/>
    <property type="project" value="FlyBase"/>
</dbReference>
<dbReference type="GO" id="GO:0006096">
    <property type="term" value="P:glycolytic process"/>
    <property type="evidence" value="ECO:0000270"/>
    <property type="project" value="FlyBase"/>
</dbReference>
<dbReference type="CDD" id="cd18126">
    <property type="entry name" value="GAPDH_I_C"/>
    <property type="match status" value="1"/>
</dbReference>
<dbReference type="CDD" id="cd05214">
    <property type="entry name" value="GAPDH_I_N"/>
    <property type="match status" value="1"/>
</dbReference>
<dbReference type="FunFam" id="3.30.360.10:FF:000001">
    <property type="entry name" value="Glyceraldehyde-3-phosphate dehydrogenase"/>
    <property type="match status" value="1"/>
</dbReference>
<dbReference type="FunFam" id="3.40.50.720:FF:000266">
    <property type="entry name" value="Glyceraldehyde-3-phosphate dehydrogenase"/>
    <property type="match status" value="1"/>
</dbReference>
<dbReference type="Gene3D" id="3.30.360.10">
    <property type="entry name" value="Dihydrodipicolinate Reductase, domain 2"/>
    <property type="match status" value="1"/>
</dbReference>
<dbReference type="Gene3D" id="3.40.50.720">
    <property type="entry name" value="NAD(P)-binding Rossmann-like Domain"/>
    <property type="match status" value="1"/>
</dbReference>
<dbReference type="InterPro" id="IPR020831">
    <property type="entry name" value="GlycerAld/Erythrose_P_DH"/>
</dbReference>
<dbReference type="InterPro" id="IPR020830">
    <property type="entry name" value="GlycerAld_3-P_DH_AS"/>
</dbReference>
<dbReference type="InterPro" id="IPR020829">
    <property type="entry name" value="GlycerAld_3-P_DH_cat"/>
</dbReference>
<dbReference type="InterPro" id="IPR020828">
    <property type="entry name" value="GlycerAld_3-P_DH_NAD(P)-bd"/>
</dbReference>
<dbReference type="InterPro" id="IPR006424">
    <property type="entry name" value="Glyceraldehyde-3-P_DH_1"/>
</dbReference>
<dbReference type="InterPro" id="IPR036291">
    <property type="entry name" value="NAD(P)-bd_dom_sf"/>
</dbReference>
<dbReference type="NCBIfam" id="TIGR01534">
    <property type="entry name" value="GAPDH-I"/>
    <property type="match status" value="1"/>
</dbReference>
<dbReference type="PANTHER" id="PTHR10836">
    <property type="entry name" value="GLYCERALDEHYDE 3-PHOSPHATE DEHYDROGENASE"/>
    <property type="match status" value="1"/>
</dbReference>
<dbReference type="PANTHER" id="PTHR10836:SF76">
    <property type="entry name" value="GLYCERALDEHYDE-3-PHOSPHATE DEHYDROGENASE-RELATED"/>
    <property type="match status" value="1"/>
</dbReference>
<dbReference type="Pfam" id="PF02800">
    <property type="entry name" value="Gp_dh_C"/>
    <property type="match status" value="1"/>
</dbReference>
<dbReference type="Pfam" id="PF00044">
    <property type="entry name" value="Gp_dh_N"/>
    <property type="match status" value="1"/>
</dbReference>
<dbReference type="PIRSF" id="PIRSF000149">
    <property type="entry name" value="GAP_DH"/>
    <property type="match status" value="1"/>
</dbReference>
<dbReference type="PRINTS" id="PR00078">
    <property type="entry name" value="G3PDHDRGNASE"/>
</dbReference>
<dbReference type="SMART" id="SM00846">
    <property type="entry name" value="Gp_dh_N"/>
    <property type="match status" value="1"/>
</dbReference>
<dbReference type="SUPFAM" id="SSF55347">
    <property type="entry name" value="Glyceraldehyde-3-phosphate dehydrogenase-like, C-terminal domain"/>
    <property type="match status" value="1"/>
</dbReference>
<dbReference type="SUPFAM" id="SSF51735">
    <property type="entry name" value="NAD(P)-binding Rossmann-fold domains"/>
    <property type="match status" value="1"/>
</dbReference>
<dbReference type="PROSITE" id="PS00071">
    <property type="entry name" value="GAPDH"/>
    <property type="match status" value="1"/>
</dbReference>
<evidence type="ECO:0000250" key="1"/>
<evidence type="ECO:0000255" key="2">
    <source>
        <dbReference type="PROSITE-ProRule" id="PRU10009"/>
    </source>
</evidence>
<evidence type="ECO:0000269" key="3">
    <source>
    </source>
</evidence>
<evidence type="ECO:0000269" key="4">
    <source>
    </source>
</evidence>
<evidence type="ECO:0000305" key="5"/>
<feature type="chain" id="PRO_0000145522" description="Glyceraldehyde-3-phosphate dehydrogenase 2">
    <location>
        <begin position="1"/>
        <end position="332"/>
    </location>
</feature>
<feature type="active site" description="Nucleophile" evidence="2">
    <location>
        <position position="149"/>
    </location>
</feature>
<feature type="binding site" evidence="1">
    <location>
        <begin position="11"/>
        <end position="12"/>
    </location>
    <ligand>
        <name>NAD(+)</name>
        <dbReference type="ChEBI" id="CHEBI:57540"/>
    </ligand>
</feature>
<feature type="binding site" evidence="1">
    <location>
        <position position="32"/>
    </location>
    <ligand>
        <name>NAD(+)</name>
        <dbReference type="ChEBI" id="CHEBI:57540"/>
    </ligand>
</feature>
<feature type="binding site" evidence="1">
    <location>
        <position position="77"/>
    </location>
    <ligand>
        <name>NAD(+)</name>
        <dbReference type="ChEBI" id="CHEBI:57540"/>
    </ligand>
</feature>
<feature type="binding site" evidence="1">
    <location>
        <begin position="148"/>
        <end position="150"/>
    </location>
    <ligand>
        <name>D-glyceraldehyde 3-phosphate</name>
        <dbReference type="ChEBI" id="CHEBI:59776"/>
    </ligand>
</feature>
<feature type="binding site" evidence="1">
    <location>
        <position position="179"/>
    </location>
    <ligand>
        <name>D-glyceraldehyde 3-phosphate</name>
        <dbReference type="ChEBI" id="CHEBI:59776"/>
    </ligand>
</feature>
<feature type="binding site" evidence="1">
    <location>
        <begin position="208"/>
        <end position="209"/>
    </location>
    <ligand>
        <name>D-glyceraldehyde 3-phosphate</name>
        <dbReference type="ChEBI" id="CHEBI:59776"/>
    </ligand>
</feature>
<feature type="binding site" evidence="1">
    <location>
        <position position="231"/>
    </location>
    <ligand>
        <name>D-glyceraldehyde 3-phosphate</name>
        <dbReference type="ChEBI" id="CHEBI:59776"/>
    </ligand>
</feature>
<feature type="binding site" evidence="1">
    <location>
        <position position="313"/>
    </location>
    <ligand>
        <name>NAD(+)</name>
        <dbReference type="ChEBI" id="CHEBI:57540"/>
    </ligand>
</feature>
<feature type="site" description="Activates thiol group during catalysis" evidence="1">
    <location>
        <position position="176"/>
    </location>
</feature>
<feature type="modified residue" description="Phosphotyrosine" evidence="3">
    <location>
        <position position="273"/>
    </location>
</feature>
<feature type="modified residue" description="Phosphothreonine" evidence="3">
    <location>
        <position position="274"/>
    </location>
</feature>
<feature type="sequence variant" description="In strain: MA2." evidence="4">
    <original>A</original>
    <variation>V</variation>
    <location>
        <position position="80"/>
    </location>
</feature>
<feature type="sequence conflict" description="In Ref. 1; AAA28561." evidence="5" ref="1">
    <original>N</original>
    <variation>K</variation>
    <location>
        <position position="38"/>
    </location>
</feature>
<comment type="catalytic activity">
    <reaction evidence="2">
        <text>D-glyceraldehyde 3-phosphate + phosphate + NAD(+) = (2R)-3-phospho-glyceroyl phosphate + NADH + H(+)</text>
        <dbReference type="Rhea" id="RHEA:10300"/>
        <dbReference type="ChEBI" id="CHEBI:15378"/>
        <dbReference type="ChEBI" id="CHEBI:43474"/>
        <dbReference type="ChEBI" id="CHEBI:57540"/>
        <dbReference type="ChEBI" id="CHEBI:57604"/>
        <dbReference type="ChEBI" id="CHEBI:57945"/>
        <dbReference type="ChEBI" id="CHEBI:59776"/>
        <dbReference type="EC" id="1.2.1.12"/>
    </reaction>
</comment>
<comment type="pathway">
    <text>Carbohydrate degradation; glycolysis; pyruvate from D-glyceraldehyde 3-phosphate: step 1/5.</text>
</comment>
<comment type="subunit">
    <text>Homotetramer.</text>
</comment>
<comment type="subcellular location">
    <subcellularLocation>
        <location>Cytoplasm</location>
    </subcellularLocation>
</comment>
<comment type="similarity">
    <text evidence="5">Belongs to the glyceraldehyde-3-phosphate dehydrogenase family.</text>
</comment>
<keyword id="KW-0963">Cytoplasm</keyword>
<keyword id="KW-0324">Glycolysis</keyword>
<keyword id="KW-0520">NAD</keyword>
<keyword id="KW-0560">Oxidoreductase</keyword>
<keyword id="KW-0597">Phosphoprotein</keyword>
<keyword id="KW-1185">Reference proteome</keyword>
<proteinExistence type="evidence at protein level"/>